<organism>
    <name type="scientific">Burkholderia cepacia</name>
    <name type="common">Pseudomonas cepacia</name>
    <dbReference type="NCBI Taxonomy" id="292"/>
    <lineage>
        <taxon>Bacteria</taxon>
        <taxon>Pseudomonadati</taxon>
        <taxon>Pseudomonadota</taxon>
        <taxon>Betaproteobacteria</taxon>
        <taxon>Burkholderiales</taxon>
        <taxon>Burkholderiaceae</taxon>
        <taxon>Burkholderia</taxon>
        <taxon>Burkholderia cepacia complex</taxon>
    </lineage>
</organism>
<gene>
    <name type="primary">fusD</name>
</gene>
<comment type="function">
    <text>Involved in the resistance (detoxification) of the fungal toxin fusaric acid.</text>
</comment>
<comment type="subcellular location">
    <subcellularLocation>
        <location evidence="2">Cell membrane</location>
        <topology evidence="2">Single-pass membrane protein</topology>
    </subcellularLocation>
</comment>
<feature type="chain" id="PRO_0000087386" description="Fusaric acid resistance protein FusD">
    <location>
        <begin position="1"/>
        <end position="208"/>
    </location>
</feature>
<feature type="transmembrane region" description="Helical" evidence="1">
    <location>
        <begin position="7"/>
        <end position="29"/>
    </location>
</feature>
<sequence length="208" mass="23039">MNDALALLLSMLVSAIAFAVLFPPTAPWLKKRLFADLRHQAVAACHARLAGLRTRFESGARDLMYQAHTLSADHPTCSATPCWMFAVLETGNAAIDLRHELATLPSDPRYAPTTPWRRAIETMRAALSSLFARPDAERFDATLAAVNDAIDATRQTLDAFTPTREERHRLQRILSHLHFVRTALLDPESPLAALNRNRPVRPQPGASS</sequence>
<evidence type="ECO:0000255" key="1"/>
<evidence type="ECO:0000305" key="2"/>
<name>FUSD_BURCE</name>
<accession>P24129</accession>
<keyword id="KW-1003">Cell membrane</keyword>
<keyword id="KW-0472">Membrane</keyword>
<keyword id="KW-0812">Transmembrane</keyword>
<keyword id="KW-1133">Transmembrane helix</keyword>
<proteinExistence type="predicted"/>
<dbReference type="EMBL" id="S77489">
    <property type="protein sequence ID" value="AAC60391.1"/>
    <property type="molecule type" value="Genomic_DNA"/>
</dbReference>
<dbReference type="EMBL" id="D12503">
    <property type="protein sequence ID" value="BAA02067.1"/>
    <property type="molecule type" value="Genomic_DNA"/>
</dbReference>
<dbReference type="PIR" id="JS0512">
    <property type="entry name" value="JS0512"/>
</dbReference>
<dbReference type="GO" id="GO:0005886">
    <property type="term" value="C:plasma membrane"/>
    <property type="evidence" value="ECO:0007669"/>
    <property type="project" value="UniProtKB-SubCell"/>
</dbReference>
<dbReference type="GO" id="GO:0022857">
    <property type="term" value="F:transmembrane transporter activity"/>
    <property type="evidence" value="ECO:0007669"/>
    <property type="project" value="InterPro"/>
</dbReference>
<dbReference type="InterPro" id="IPR006726">
    <property type="entry name" value="PHBA_efflux_AaeB/fusaric-R"/>
</dbReference>
<dbReference type="Pfam" id="PF04632">
    <property type="entry name" value="FUSC"/>
    <property type="match status" value="1"/>
</dbReference>
<protein>
    <recommendedName>
        <fullName>Fusaric acid resistance protein FusD</fullName>
    </recommendedName>
</protein>
<reference key="1">
    <citation type="journal article" date="1991" name="Agric. Biol. Chem.">
        <title>Molecular cloning and characterization of the fusaric acid-resistance gene from Pseudomonas cepacia.</title>
        <authorList>
            <person name="Utsumi R."/>
            <person name="Yagi T."/>
            <person name="Katayama S."/>
            <person name="Katsuragi K."/>
            <person name="Tachibana K."/>
            <person name="Toyoda H."/>
            <person name="Ouchi S."/>
            <person name="Obata K."/>
            <person name="Shibano Y."/>
            <person name="Noda M."/>
        </authorList>
    </citation>
    <scope>NUCLEOTIDE SEQUENCE [GENOMIC DNA]</scope>
    <source>
        <strain>UK1</strain>
    </source>
</reference>